<organism>
    <name type="scientific">Helicobacter pylori (strain ATCC 700392 / 26695)</name>
    <name type="common">Campylobacter pylori</name>
    <dbReference type="NCBI Taxonomy" id="85962"/>
    <lineage>
        <taxon>Bacteria</taxon>
        <taxon>Pseudomonadati</taxon>
        <taxon>Campylobacterota</taxon>
        <taxon>Epsilonproteobacteria</taxon>
        <taxon>Campylobacterales</taxon>
        <taxon>Helicobacteraceae</taxon>
        <taxon>Helicobacter</taxon>
    </lineage>
</organism>
<evidence type="ECO:0000255" key="1">
    <source>
        <dbReference type="HAMAP-Rule" id="MF_01589"/>
    </source>
</evidence>
<protein>
    <recommendedName>
        <fullName evidence="1">Carboxy-S-adenosyl-L-methionine synthase</fullName>
        <shortName evidence="1">Cx-SAM synthase</shortName>
        <ecNumber evidence="1">2.1.3.-</ecNumber>
    </recommendedName>
</protein>
<reference key="1">
    <citation type="journal article" date="1997" name="Nature">
        <title>The complete genome sequence of the gastric pathogen Helicobacter pylori.</title>
        <authorList>
            <person name="Tomb J.-F."/>
            <person name="White O."/>
            <person name="Kerlavage A.R."/>
            <person name="Clayton R.A."/>
            <person name="Sutton G.G."/>
            <person name="Fleischmann R.D."/>
            <person name="Ketchum K.A."/>
            <person name="Klenk H.-P."/>
            <person name="Gill S.R."/>
            <person name="Dougherty B.A."/>
            <person name="Nelson K.E."/>
            <person name="Quackenbush J."/>
            <person name="Zhou L."/>
            <person name="Kirkness E.F."/>
            <person name="Peterson S.N."/>
            <person name="Loftus B.J."/>
            <person name="Richardson D.L."/>
            <person name="Dodson R.J."/>
            <person name="Khalak H.G."/>
            <person name="Glodek A."/>
            <person name="McKenney K."/>
            <person name="FitzGerald L.M."/>
            <person name="Lee N."/>
            <person name="Adams M.D."/>
            <person name="Hickey E.K."/>
            <person name="Berg D.E."/>
            <person name="Gocayne J.D."/>
            <person name="Utterback T.R."/>
            <person name="Peterson J.D."/>
            <person name="Kelley J.M."/>
            <person name="Cotton M.D."/>
            <person name="Weidman J.F."/>
            <person name="Fujii C."/>
            <person name="Bowman C."/>
            <person name="Watthey L."/>
            <person name="Wallin E."/>
            <person name="Hayes W.S."/>
            <person name="Borodovsky M."/>
            <person name="Karp P.D."/>
            <person name="Smith H.O."/>
            <person name="Fraser C.M."/>
            <person name="Venter J.C."/>
        </authorList>
    </citation>
    <scope>NUCLEOTIDE SEQUENCE [LARGE SCALE GENOMIC DNA]</scope>
    <source>
        <strain>ATCC 700392 / 26695</strain>
    </source>
</reference>
<proteinExistence type="inferred from homology"/>
<keyword id="KW-1185">Reference proteome</keyword>
<keyword id="KW-0949">S-adenosyl-L-methionine</keyword>
<keyword id="KW-0808">Transferase</keyword>
<feature type="chain" id="PRO_0000314340" description="Carboxy-S-adenosyl-L-methionine synthase">
    <location>
        <begin position="1"/>
        <end position="243"/>
    </location>
</feature>
<feature type="binding site" evidence="1">
    <location>
        <position position="35"/>
    </location>
    <ligand>
        <name>S-adenosyl-L-methionine</name>
        <dbReference type="ChEBI" id="CHEBI:59789"/>
    </ligand>
</feature>
<feature type="binding site" evidence="1">
    <location>
        <begin position="68"/>
        <end position="70"/>
    </location>
    <ligand>
        <name>S-adenosyl-L-methionine</name>
        <dbReference type="ChEBI" id="CHEBI:59789"/>
    </ligand>
</feature>
<feature type="binding site" evidence="1">
    <location>
        <begin position="92"/>
        <end position="93"/>
    </location>
    <ligand>
        <name>S-adenosyl-L-methionine</name>
        <dbReference type="ChEBI" id="CHEBI:59789"/>
    </ligand>
</feature>
<feature type="binding site" evidence="1">
    <location>
        <position position="199"/>
    </location>
    <ligand>
        <name>S-adenosyl-L-methionine</name>
        <dbReference type="ChEBI" id="CHEBI:59789"/>
    </ligand>
</feature>
<dbReference type="EC" id="2.1.3.-" evidence="1"/>
<dbReference type="EMBL" id="AE000511">
    <property type="protein sequence ID" value="AAD07453.1"/>
    <property type="molecule type" value="Genomic_DNA"/>
</dbReference>
<dbReference type="PIR" id="D64568">
    <property type="entry name" value="D64568"/>
</dbReference>
<dbReference type="RefSeq" id="NP_207186.1">
    <property type="nucleotide sequence ID" value="NC_000915.1"/>
</dbReference>
<dbReference type="RefSeq" id="WP_000655545.1">
    <property type="nucleotide sequence ID" value="NC_018939.1"/>
</dbReference>
<dbReference type="SMR" id="O25150"/>
<dbReference type="FunCoup" id="O25150">
    <property type="interactions" value="42"/>
</dbReference>
<dbReference type="STRING" id="85962.HP_0388"/>
<dbReference type="PaxDb" id="85962-C694_01970"/>
<dbReference type="EnsemblBacteria" id="AAD07453">
    <property type="protein sequence ID" value="AAD07453"/>
    <property type="gene ID" value="HP_0388"/>
</dbReference>
<dbReference type="KEGG" id="heo:C694_01970"/>
<dbReference type="KEGG" id="hpy:HP_0388"/>
<dbReference type="PATRIC" id="fig|85962.47.peg.412"/>
<dbReference type="eggNOG" id="COG2226">
    <property type="taxonomic scope" value="Bacteria"/>
</dbReference>
<dbReference type="InParanoid" id="O25150"/>
<dbReference type="OrthoDB" id="5386938at2"/>
<dbReference type="PhylomeDB" id="O25150"/>
<dbReference type="Proteomes" id="UP000000429">
    <property type="component" value="Chromosome"/>
</dbReference>
<dbReference type="GO" id="GO:0016743">
    <property type="term" value="F:carboxyl- or carbamoyltransferase activity"/>
    <property type="evidence" value="ECO:0007669"/>
    <property type="project" value="UniProtKB-UniRule"/>
</dbReference>
<dbReference type="GO" id="GO:1904047">
    <property type="term" value="F:S-adenosyl-L-methionine binding"/>
    <property type="evidence" value="ECO:0007669"/>
    <property type="project" value="UniProtKB-UniRule"/>
</dbReference>
<dbReference type="GO" id="GO:0071281">
    <property type="term" value="P:cellular response to iron ion"/>
    <property type="evidence" value="ECO:0000269"/>
    <property type="project" value="CollecTF"/>
</dbReference>
<dbReference type="GO" id="GO:0002098">
    <property type="term" value="P:tRNA wobble uridine modification"/>
    <property type="evidence" value="ECO:0007669"/>
    <property type="project" value="InterPro"/>
</dbReference>
<dbReference type="CDD" id="cd02440">
    <property type="entry name" value="AdoMet_MTases"/>
    <property type="match status" value="1"/>
</dbReference>
<dbReference type="FunFam" id="3.40.50.150:FF:000474">
    <property type="entry name" value="Carboxy-S-adenosyl-L-methionine synthase"/>
    <property type="match status" value="1"/>
</dbReference>
<dbReference type="Gene3D" id="3.40.50.150">
    <property type="entry name" value="Vaccinia Virus protein VP39"/>
    <property type="match status" value="1"/>
</dbReference>
<dbReference type="HAMAP" id="MF_01589">
    <property type="entry name" value="Cx_SAM_synthase"/>
    <property type="match status" value="1"/>
</dbReference>
<dbReference type="InterPro" id="IPR005271">
    <property type="entry name" value="CmoA"/>
</dbReference>
<dbReference type="InterPro" id="IPR041698">
    <property type="entry name" value="Methyltransf_25"/>
</dbReference>
<dbReference type="InterPro" id="IPR029063">
    <property type="entry name" value="SAM-dependent_MTases_sf"/>
</dbReference>
<dbReference type="NCBIfam" id="TIGR00740">
    <property type="entry name" value="carboxy-S-adenosyl-L-methionine synthase CmoA"/>
    <property type="match status" value="1"/>
</dbReference>
<dbReference type="PANTHER" id="PTHR43861:SF2">
    <property type="entry name" value="CARBOXY-S-ADENOSYL-L-METHIONINE SYNTHASE"/>
    <property type="match status" value="1"/>
</dbReference>
<dbReference type="PANTHER" id="PTHR43861">
    <property type="entry name" value="TRANS-ACONITATE 2-METHYLTRANSFERASE-RELATED"/>
    <property type="match status" value="1"/>
</dbReference>
<dbReference type="Pfam" id="PF13649">
    <property type="entry name" value="Methyltransf_25"/>
    <property type="match status" value="1"/>
</dbReference>
<dbReference type="PIRSF" id="PIRSF006325">
    <property type="entry name" value="MeTrfase_bac"/>
    <property type="match status" value="1"/>
</dbReference>
<dbReference type="SUPFAM" id="SSF53335">
    <property type="entry name" value="S-adenosyl-L-methionine-dependent methyltransferases"/>
    <property type="match status" value="1"/>
</dbReference>
<gene>
    <name evidence="1" type="primary">cmoA</name>
    <name type="ordered locus">HP_0388</name>
</gene>
<comment type="function">
    <text evidence="1">Catalyzes the conversion of S-adenosyl-L-methionine (SAM) to carboxy-S-adenosyl-L-methionine (Cx-SAM).</text>
</comment>
<comment type="catalytic activity">
    <reaction evidence="1">
        <text>prephenate + S-adenosyl-L-methionine = carboxy-S-adenosyl-L-methionine + 3-phenylpyruvate + H2O</text>
        <dbReference type="Rhea" id="RHEA:51692"/>
        <dbReference type="ChEBI" id="CHEBI:15377"/>
        <dbReference type="ChEBI" id="CHEBI:18005"/>
        <dbReference type="ChEBI" id="CHEBI:29934"/>
        <dbReference type="ChEBI" id="CHEBI:59789"/>
        <dbReference type="ChEBI" id="CHEBI:134278"/>
    </reaction>
</comment>
<comment type="subunit">
    <text evidence="1">Homodimer.</text>
</comment>
<comment type="similarity">
    <text evidence="1">Belongs to the class I-like SAM-binding methyltransferase superfamily. Cx-SAM synthase family.</text>
</comment>
<name>CMOA_HELPY</name>
<sequence length="243" mass="28482">MKDTLFNESLNKRFCFDEKVAHVFDDMLERSIPYYHEMLNLGAYFIAQNLKENIYPKSLPKPLIYDLGCSTGNFFIALNRQIQQEIELVGIDNSMPMLKKAQEKLKDFNNARFECMDFLEVEFKEASAFSLLFVLQFVRPMQREVLLKKIYNSLALNGVLLVGEKIMSEDRILDKQMIELYYLYKQNQGYSHNEIAFKREALENVLVPYSLKENVALLESVGFKHVEALFKWVNFTLLVARKT</sequence>
<accession>O25150</accession>